<accession>Q73KI2</accession>
<dbReference type="EC" id="5.4.99.1" evidence="1"/>
<dbReference type="EMBL" id="AE017226">
    <property type="protein sequence ID" value="AAS12755.1"/>
    <property type="molecule type" value="Genomic_DNA"/>
</dbReference>
<dbReference type="RefSeq" id="NP_972836.1">
    <property type="nucleotide sequence ID" value="NC_002967.9"/>
</dbReference>
<dbReference type="RefSeq" id="WP_002680091.1">
    <property type="nucleotide sequence ID" value="NC_002967.9"/>
</dbReference>
<dbReference type="SMR" id="Q73KI2"/>
<dbReference type="STRING" id="243275.TDE_2236"/>
<dbReference type="PaxDb" id="243275-TDE_2236"/>
<dbReference type="GeneID" id="2741341"/>
<dbReference type="KEGG" id="tde:TDE_2236"/>
<dbReference type="PATRIC" id="fig|243275.7.peg.2112"/>
<dbReference type="eggNOG" id="COG4865">
    <property type="taxonomic scope" value="Bacteria"/>
</dbReference>
<dbReference type="HOGENOM" id="CLU_029922_0_0_12"/>
<dbReference type="OrthoDB" id="9763360at2"/>
<dbReference type="UniPathway" id="UPA00561">
    <property type="reaction ID" value="UER00617"/>
</dbReference>
<dbReference type="Proteomes" id="UP000008212">
    <property type="component" value="Chromosome"/>
</dbReference>
<dbReference type="GO" id="GO:0031419">
    <property type="term" value="F:cobalamin binding"/>
    <property type="evidence" value="ECO:0007669"/>
    <property type="project" value="UniProtKB-KW"/>
</dbReference>
<dbReference type="GO" id="GO:0050097">
    <property type="term" value="F:methylaspartate mutase activity"/>
    <property type="evidence" value="ECO:0007669"/>
    <property type="project" value="UniProtKB-UniRule"/>
</dbReference>
<dbReference type="GO" id="GO:0019670">
    <property type="term" value="P:anaerobic glutamate catabolic process"/>
    <property type="evidence" value="ECO:0007669"/>
    <property type="project" value="InterPro"/>
</dbReference>
<dbReference type="GO" id="GO:0019553">
    <property type="term" value="P:glutamate catabolic process via L-citramalate"/>
    <property type="evidence" value="ECO:0007669"/>
    <property type="project" value="UniProtKB-UniRule"/>
</dbReference>
<dbReference type="CDD" id="cd00245">
    <property type="entry name" value="Glm_e"/>
    <property type="match status" value="1"/>
</dbReference>
<dbReference type="Gene3D" id="3.90.970.10">
    <property type="match status" value="1"/>
</dbReference>
<dbReference type="Gene3D" id="3.20.20.240">
    <property type="entry name" value="Methylmalonyl-CoA mutase"/>
    <property type="match status" value="1"/>
</dbReference>
<dbReference type="HAMAP" id="MF_01923">
    <property type="entry name" value="Me_Asp_mutase_E"/>
    <property type="match status" value="1"/>
</dbReference>
<dbReference type="InterPro" id="IPR016176">
    <property type="entry name" value="Cbl-dep_enz_cat"/>
</dbReference>
<dbReference type="InterPro" id="IPR006396">
    <property type="entry name" value="Glu_mut_E"/>
</dbReference>
<dbReference type="InterPro" id="IPR014714">
    <property type="entry name" value="Glu_mut_E_C_dom_sf"/>
</dbReference>
<dbReference type="NCBIfam" id="TIGR01503">
    <property type="entry name" value="MthylAspMut_E"/>
    <property type="match status" value="1"/>
</dbReference>
<dbReference type="Pfam" id="PF06368">
    <property type="entry name" value="Met_asp_mut_E"/>
    <property type="match status" value="1"/>
</dbReference>
<dbReference type="PIRSF" id="PIRSF001495">
    <property type="entry name" value="Met_asp_mut_epsi"/>
    <property type="match status" value="1"/>
</dbReference>
<dbReference type="SUPFAM" id="SSF51703">
    <property type="entry name" value="Cobalamin (vitamin B12)-dependent enzymes"/>
    <property type="match status" value="1"/>
</dbReference>
<proteinExistence type="inferred from homology"/>
<organism>
    <name type="scientific">Treponema denticola (strain ATCC 35405 / DSM 14222 / CIP 103919 / JCM 8153 / KCTC 15104)</name>
    <dbReference type="NCBI Taxonomy" id="243275"/>
    <lineage>
        <taxon>Bacteria</taxon>
        <taxon>Pseudomonadati</taxon>
        <taxon>Spirochaetota</taxon>
        <taxon>Spirochaetia</taxon>
        <taxon>Spirochaetales</taxon>
        <taxon>Treponemataceae</taxon>
        <taxon>Treponema</taxon>
    </lineage>
</organism>
<sequence length="485" mass="53131">MRWKNKKIPEGEFMEMREEILQTWPTGKDVDLKESIDYLKKIPPEKNFAIKLEQADKEGITTAQPRAGVPLLDEHINLLQFLQDEGGADFLPSTIDAYTRQNRYEEGEAGIEASKKAGRSLMNGFPAVNWGVGPCRQVLEAVNLPLQARHGTPDARLLSEIIHAGGYTSNEGGGISYNVPYAKAVSIEHSIMCWQYADRLVGFYEENGVHLNREPFGPLTGTLVPPSVAIAVGVIEALLAAEQGVKSITVGYGMCGNMTQDVAAVISLREITKDYMKKFGYKDMCITTVFHQWMGGFPADESRAYGLISLGSTTAALSGATKVIVKTPHEAFGIPTKEANAGGIKATKMVLNLLKGQRYPDSRVLAQEIELIKAETKCIMDKVYEIGGGDLVEGTIKAFEAGVIDIPFAPSQYNAGKVMPARDNDGCIRYLMPGNLPFTKDILDFNRGKLEERAKADKREVDFQMSVDDVYAVSSGVLVGRPAKR</sequence>
<name>GLME_TREDE</name>
<evidence type="ECO:0000255" key="1">
    <source>
        <dbReference type="HAMAP-Rule" id="MF_01923"/>
    </source>
</evidence>
<protein>
    <recommendedName>
        <fullName evidence="1">Glutamate mutase epsilon subunit</fullName>
        <ecNumber evidence="1">5.4.99.1</ecNumber>
    </recommendedName>
    <alternativeName>
        <fullName evidence="1">Glutamate mutase E chain</fullName>
    </alternativeName>
    <alternativeName>
        <fullName evidence="1">Glutamate mutase large subunit</fullName>
    </alternativeName>
    <alternativeName>
        <fullName evidence="1">Methylaspartate mutase</fullName>
    </alternativeName>
</protein>
<gene>
    <name evidence="1" type="primary">glmE</name>
    <name type="ordered locus">TDE_2236</name>
</gene>
<comment type="function">
    <text evidence="1">Catalyzes the carbon skeleton rearrangement of L-glutamate to L-threo-3-methylaspartate ((2S,3S)-3-methylaspartate).</text>
</comment>
<comment type="catalytic activity">
    <reaction evidence="1">
        <text>(2S,3S)-3-methyl-L-aspartate = L-glutamate</text>
        <dbReference type="Rhea" id="RHEA:12857"/>
        <dbReference type="ChEBI" id="CHEBI:29985"/>
        <dbReference type="ChEBI" id="CHEBI:58724"/>
        <dbReference type="EC" id="5.4.99.1"/>
    </reaction>
</comment>
<comment type="cofactor">
    <cofactor evidence="1">
        <name>adenosylcob(III)alamin</name>
        <dbReference type="ChEBI" id="CHEBI:18408"/>
    </cofactor>
</comment>
<comment type="pathway">
    <text evidence="1">Amino-acid degradation; L-glutamate degradation via mesaconate pathway; acetate and pyruvate from L-glutamate: step 1/4.</text>
</comment>
<comment type="subunit">
    <text evidence="1">Heterotetramer composed of 2 epsilon subunits (GlmE) and 2 sigma subunits (GlmS). GlmE exists as a homodimer and GlmS as a monomer.</text>
</comment>
<comment type="similarity">
    <text evidence="1">Belongs to the methylaspartate mutase GlmE subunit family.</text>
</comment>
<feature type="chain" id="PRO_0000429446" description="Glutamate mutase epsilon subunit">
    <location>
        <begin position="1"/>
        <end position="485"/>
    </location>
</feature>
<feature type="binding site" evidence="1">
    <location>
        <position position="66"/>
    </location>
    <ligand>
        <name>L-glutamate</name>
        <dbReference type="ChEBI" id="CHEBI:29985"/>
    </ligand>
</feature>
<feature type="binding site" evidence="1">
    <location>
        <position position="68"/>
    </location>
    <ligand>
        <name>adenosylcob(III)alamin</name>
        <dbReference type="ChEBI" id="CHEBI:18408"/>
    </ligand>
</feature>
<feature type="binding site" evidence="1">
    <location>
        <position position="100"/>
    </location>
    <ligand>
        <name>L-glutamate</name>
        <dbReference type="ChEBI" id="CHEBI:29985"/>
    </ligand>
</feature>
<feature type="binding site" evidence="1">
    <location>
        <position position="123"/>
    </location>
    <ligand>
        <name>adenosylcob(III)alamin</name>
        <dbReference type="ChEBI" id="CHEBI:18408"/>
    </ligand>
</feature>
<feature type="binding site" evidence="1">
    <location>
        <begin position="149"/>
        <end position="150"/>
    </location>
    <ligand>
        <name>L-glutamate</name>
        <dbReference type="ChEBI" id="CHEBI:29985"/>
    </ligand>
</feature>
<feature type="binding site" evidence="1">
    <location>
        <position position="171"/>
    </location>
    <ligand>
        <name>L-glutamate</name>
        <dbReference type="ChEBI" id="CHEBI:29985"/>
    </ligand>
</feature>
<feature type="binding site" evidence="1">
    <location>
        <position position="177"/>
    </location>
    <ligand>
        <name>L-glutamate</name>
        <dbReference type="ChEBI" id="CHEBI:29985"/>
    </ligand>
</feature>
<feature type="binding site" evidence="1">
    <location>
        <position position="180"/>
    </location>
    <ligand>
        <name>adenosylcob(III)alamin</name>
        <dbReference type="ChEBI" id="CHEBI:18408"/>
    </ligand>
</feature>
<feature type="binding site" evidence="1">
    <location>
        <position position="181"/>
    </location>
    <ligand>
        <name>L-glutamate</name>
        <dbReference type="ChEBI" id="CHEBI:29985"/>
    </ligand>
</feature>
<feature type="binding site" evidence="1">
    <location>
        <position position="297"/>
    </location>
    <ligand>
        <name>adenosylcob(III)alamin</name>
        <dbReference type="ChEBI" id="CHEBI:18408"/>
    </ligand>
</feature>
<feature type="binding site" evidence="1">
    <location>
        <position position="326"/>
    </location>
    <ligand>
        <name>adenosylcob(III)alamin</name>
        <dbReference type="ChEBI" id="CHEBI:18408"/>
    </ligand>
</feature>
<feature type="binding site" evidence="1">
    <location>
        <position position="330"/>
    </location>
    <ligand>
        <name>adenosylcob(III)alamin</name>
        <dbReference type="ChEBI" id="CHEBI:18408"/>
    </ligand>
</feature>
<feature type="binding site" evidence="1">
    <location>
        <position position="334"/>
    </location>
    <ligand>
        <name>adenosylcob(III)alamin</name>
        <dbReference type="ChEBI" id="CHEBI:18408"/>
    </ligand>
</feature>
<keyword id="KW-0846">Cobalamin</keyword>
<keyword id="KW-0170">Cobalt</keyword>
<keyword id="KW-0413">Isomerase</keyword>
<keyword id="KW-1185">Reference proteome</keyword>
<reference key="1">
    <citation type="journal article" date="2004" name="Proc. Natl. Acad. Sci. U.S.A.">
        <title>Comparison of the genome of the oral pathogen Treponema denticola with other spirochete genomes.</title>
        <authorList>
            <person name="Seshadri R."/>
            <person name="Myers G.S.A."/>
            <person name="Tettelin H."/>
            <person name="Eisen J.A."/>
            <person name="Heidelberg J.F."/>
            <person name="Dodson R.J."/>
            <person name="Davidsen T.M."/>
            <person name="DeBoy R.T."/>
            <person name="Fouts D.E."/>
            <person name="Haft D.H."/>
            <person name="Selengut J."/>
            <person name="Ren Q."/>
            <person name="Brinkac L.M."/>
            <person name="Madupu R."/>
            <person name="Kolonay J.F."/>
            <person name="Durkin S.A."/>
            <person name="Daugherty S.C."/>
            <person name="Shetty J."/>
            <person name="Shvartsbeyn A."/>
            <person name="Gebregeorgis E."/>
            <person name="Geer K."/>
            <person name="Tsegaye G."/>
            <person name="Malek J.A."/>
            <person name="Ayodeji B."/>
            <person name="Shatsman S."/>
            <person name="McLeod M.P."/>
            <person name="Smajs D."/>
            <person name="Howell J.K."/>
            <person name="Pal S."/>
            <person name="Amin A."/>
            <person name="Vashisth P."/>
            <person name="McNeill T.Z."/>
            <person name="Xiang Q."/>
            <person name="Sodergren E."/>
            <person name="Baca E."/>
            <person name="Weinstock G.M."/>
            <person name="Norris S.J."/>
            <person name="Fraser C.M."/>
            <person name="Paulsen I.T."/>
        </authorList>
    </citation>
    <scope>NUCLEOTIDE SEQUENCE [LARGE SCALE GENOMIC DNA]</scope>
    <source>
        <strain>ATCC 35405 / DSM 14222 / CIP 103919 / JCM 8153 / KCTC 15104</strain>
    </source>
</reference>